<reference key="1">
    <citation type="journal article" date="2007" name="J. Bacteriol.">
        <title>The complete genome sequence of Bacillus thuringiensis Al Hakam.</title>
        <authorList>
            <person name="Challacombe J.F."/>
            <person name="Altherr M.R."/>
            <person name="Xie G."/>
            <person name="Bhotika S.S."/>
            <person name="Brown N."/>
            <person name="Bruce D."/>
            <person name="Campbell C.S."/>
            <person name="Campbell M.L."/>
            <person name="Chen J."/>
            <person name="Chertkov O."/>
            <person name="Cleland C."/>
            <person name="Dimitrijevic M."/>
            <person name="Doggett N.A."/>
            <person name="Fawcett J.J."/>
            <person name="Glavina T."/>
            <person name="Goodwin L.A."/>
            <person name="Green L.D."/>
            <person name="Han C.S."/>
            <person name="Hill K.K."/>
            <person name="Hitchcock P."/>
            <person name="Jackson P.J."/>
            <person name="Keim P."/>
            <person name="Kewalramani A.R."/>
            <person name="Longmire J."/>
            <person name="Lucas S."/>
            <person name="Malfatti S."/>
            <person name="Martinez D."/>
            <person name="McMurry K."/>
            <person name="Meincke L.J."/>
            <person name="Misra M."/>
            <person name="Moseman B.L."/>
            <person name="Mundt M."/>
            <person name="Munk A.C."/>
            <person name="Okinaka R.T."/>
            <person name="Parson-Quintana B."/>
            <person name="Reilly L.P."/>
            <person name="Richardson P."/>
            <person name="Robinson D.L."/>
            <person name="Saunders E."/>
            <person name="Tapia R."/>
            <person name="Tesmer J.G."/>
            <person name="Thayer N."/>
            <person name="Thompson L.S."/>
            <person name="Tice H."/>
            <person name="Ticknor L.O."/>
            <person name="Wills P.L."/>
            <person name="Gilna P."/>
            <person name="Brettin T.S."/>
        </authorList>
    </citation>
    <scope>NUCLEOTIDE SEQUENCE [LARGE SCALE GENOMIC DNA]</scope>
    <source>
        <strain>Al Hakam</strain>
    </source>
</reference>
<keyword id="KW-0067">ATP-binding</keyword>
<keyword id="KW-0460">Magnesium</keyword>
<keyword id="KW-0464">Manganese</keyword>
<keyword id="KW-0479">Metal-binding</keyword>
<keyword id="KW-0547">Nucleotide-binding</keyword>
<keyword id="KW-0548">Nucleotidyltransferase</keyword>
<keyword id="KW-0808">Transferase</keyword>
<protein>
    <recommendedName>
        <fullName evidence="1">Protein nucleotidyltransferase YdiU</fullName>
        <ecNumber evidence="1">2.7.7.-</ecNumber>
    </recommendedName>
    <alternativeName>
        <fullName evidence="1">Protein adenylyltransferase YdiU</fullName>
        <ecNumber evidence="1">2.7.7.108</ecNumber>
    </alternativeName>
    <alternativeName>
        <fullName evidence="1">Protein uridylyltransferase YdiU</fullName>
        <ecNumber evidence="1">2.7.7.-</ecNumber>
    </alternativeName>
</protein>
<evidence type="ECO:0000255" key="1">
    <source>
        <dbReference type="HAMAP-Rule" id="MF_00692"/>
    </source>
</evidence>
<organism>
    <name type="scientific">Bacillus thuringiensis (strain Al Hakam)</name>
    <dbReference type="NCBI Taxonomy" id="412694"/>
    <lineage>
        <taxon>Bacteria</taxon>
        <taxon>Bacillati</taxon>
        <taxon>Bacillota</taxon>
        <taxon>Bacilli</taxon>
        <taxon>Bacillales</taxon>
        <taxon>Bacillaceae</taxon>
        <taxon>Bacillus</taxon>
        <taxon>Bacillus cereus group</taxon>
    </lineage>
</organism>
<sequence length="488" mass="55091">MTKNNEVGWNLDNSYATLPQSFYTEIPPTPVSSPELVKLNHSLAISLGFNPEELKKEAEIAIFAGNALPEGAHPLAQAYAGHQFGHFNMLGDGRALLIGEQITPSGKRFDIQLKGSGPTPYSRRGDGRAALGPMLREYIISEAMYALDIPTTRSLAVVTTGEPTYRETKLPGAILTRVASSHIRVGTFQYAAARGSIEDLQSLADYTIKRHYPEIEAHENRYTALLQEVIKKQASLIAKWQLVGFIHGVMNTDNITISGETIDYGPCAFMDNYDQGTVFSSIDTQGRYAYGNQPYMAAWDLARLAESLIPILHEDEEEALKIAQDEISKFSVQYEKQWFIGMKKKLGLFSNEEQDQSLIEQLFKMMEKYKADYTNTFRSLTLDTLENTPLFDSPEFKEWYKLWQSRLEKQEESKENAYEMMKNNNPSIIPRNHRVEEALEAAVTNGDYSVMEKLLEALANPYAYSTDQEEYCVPPAPTNRPYRTFCGT</sequence>
<feature type="chain" id="PRO_1000045238" description="Protein nucleotidyltransferase YdiU">
    <location>
        <begin position="1"/>
        <end position="488"/>
    </location>
</feature>
<feature type="active site" description="Proton acceptor" evidence="1">
    <location>
        <position position="253"/>
    </location>
</feature>
<feature type="binding site" evidence="1">
    <location>
        <position position="91"/>
    </location>
    <ligand>
        <name>ATP</name>
        <dbReference type="ChEBI" id="CHEBI:30616"/>
    </ligand>
</feature>
<feature type="binding site" evidence="1">
    <location>
        <position position="93"/>
    </location>
    <ligand>
        <name>ATP</name>
        <dbReference type="ChEBI" id="CHEBI:30616"/>
    </ligand>
</feature>
<feature type="binding site" evidence="1">
    <location>
        <position position="94"/>
    </location>
    <ligand>
        <name>ATP</name>
        <dbReference type="ChEBI" id="CHEBI:30616"/>
    </ligand>
</feature>
<feature type="binding site" evidence="1">
    <location>
        <position position="114"/>
    </location>
    <ligand>
        <name>ATP</name>
        <dbReference type="ChEBI" id="CHEBI:30616"/>
    </ligand>
</feature>
<feature type="binding site" evidence="1">
    <location>
        <position position="126"/>
    </location>
    <ligand>
        <name>ATP</name>
        <dbReference type="ChEBI" id="CHEBI:30616"/>
    </ligand>
</feature>
<feature type="binding site" evidence="1">
    <location>
        <position position="127"/>
    </location>
    <ligand>
        <name>ATP</name>
        <dbReference type="ChEBI" id="CHEBI:30616"/>
    </ligand>
</feature>
<feature type="binding site" evidence="1">
    <location>
        <position position="177"/>
    </location>
    <ligand>
        <name>ATP</name>
        <dbReference type="ChEBI" id="CHEBI:30616"/>
    </ligand>
</feature>
<feature type="binding site" evidence="1">
    <location>
        <position position="184"/>
    </location>
    <ligand>
        <name>ATP</name>
        <dbReference type="ChEBI" id="CHEBI:30616"/>
    </ligand>
</feature>
<feature type="binding site" evidence="1">
    <location>
        <position position="254"/>
    </location>
    <ligand>
        <name>Mg(2+)</name>
        <dbReference type="ChEBI" id="CHEBI:18420"/>
    </ligand>
</feature>
<feature type="binding site" evidence="1">
    <location>
        <position position="263"/>
    </location>
    <ligand>
        <name>ATP</name>
        <dbReference type="ChEBI" id="CHEBI:30616"/>
    </ligand>
</feature>
<feature type="binding site" evidence="1">
    <location>
        <position position="263"/>
    </location>
    <ligand>
        <name>Mg(2+)</name>
        <dbReference type="ChEBI" id="CHEBI:18420"/>
    </ligand>
</feature>
<comment type="function">
    <text evidence="1">Nucleotidyltransferase involved in the post-translational modification of proteins. It can catalyze the addition of adenosine monophosphate (AMP) or uridine monophosphate (UMP) to a protein, resulting in modifications known as AMPylation and UMPylation.</text>
</comment>
<comment type="catalytic activity">
    <reaction evidence="1">
        <text>L-seryl-[protein] + ATP = 3-O-(5'-adenylyl)-L-seryl-[protein] + diphosphate</text>
        <dbReference type="Rhea" id="RHEA:58120"/>
        <dbReference type="Rhea" id="RHEA-COMP:9863"/>
        <dbReference type="Rhea" id="RHEA-COMP:15073"/>
        <dbReference type="ChEBI" id="CHEBI:29999"/>
        <dbReference type="ChEBI" id="CHEBI:30616"/>
        <dbReference type="ChEBI" id="CHEBI:33019"/>
        <dbReference type="ChEBI" id="CHEBI:142516"/>
        <dbReference type="EC" id="2.7.7.108"/>
    </reaction>
</comment>
<comment type="catalytic activity">
    <reaction evidence="1">
        <text>L-threonyl-[protein] + ATP = 3-O-(5'-adenylyl)-L-threonyl-[protein] + diphosphate</text>
        <dbReference type="Rhea" id="RHEA:54292"/>
        <dbReference type="Rhea" id="RHEA-COMP:11060"/>
        <dbReference type="Rhea" id="RHEA-COMP:13847"/>
        <dbReference type="ChEBI" id="CHEBI:30013"/>
        <dbReference type="ChEBI" id="CHEBI:30616"/>
        <dbReference type="ChEBI" id="CHEBI:33019"/>
        <dbReference type="ChEBI" id="CHEBI:138113"/>
        <dbReference type="EC" id="2.7.7.108"/>
    </reaction>
</comment>
<comment type="catalytic activity">
    <reaction evidence="1">
        <text>L-tyrosyl-[protein] + ATP = O-(5'-adenylyl)-L-tyrosyl-[protein] + diphosphate</text>
        <dbReference type="Rhea" id="RHEA:54288"/>
        <dbReference type="Rhea" id="RHEA-COMP:10136"/>
        <dbReference type="Rhea" id="RHEA-COMP:13846"/>
        <dbReference type="ChEBI" id="CHEBI:30616"/>
        <dbReference type="ChEBI" id="CHEBI:33019"/>
        <dbReference type="ChEBI" id="CHEBI:46858"/>
        <dbReference type="ChEBI" id="CHEBI:83624"/>
        <dbReference type="EC" id="2.7.7.108"/>
    </reaction>
</comment>
<comment type="catalytic activity">
    <reaction evidence="1">
        <text>L-histidyl-[protein] + UTP = N(tele)-(5'-uridylyl)-L-histidyl-[protein] + diphosphate</text>
        <dbReference type="Rhea" id="RHEA:83891"/>
        <dbReference type="Rhea" id="RHEA-COMP:9745"/>
        <dbReference type="Rhea" id="RHEA-COMP:20239"/>
        <dbReference type="ChEBI" id="CHEBI:29979"/>
        <dbReference type="ChEBI" id="CHEBI:33019"/>
        <dbReference type="ChEBI" id="CHEBI:46398"/>
        <dbReference type="ChEBI" id="CHEBI:233474"/>
    </reaction>
</comment>
<comment type="catalytic activity">
    <reaction evidence="1">
        <text>L-seryl-[protein] + UTP = O-(5'-uridylyl)-L-seryl-[protein] + diphosphate</text>
        <dbReference type="Rhea" id="RHEA:64604"/>
        <dbReference type="Rhea" id="RHEA-COMP:9863"/>
        <dbReference type="Rhea" id="RHEA-COMP:16635"/>
        <dbReference type="ChEBI" id="CHEBI:29999"/>
        <dbReference type="ChEBI" id="CHEBI:33019"/>
        <dbReference type="ChEBI" id="CHEBI:46398"/>
        <dbReference type="ChEBI" id="CHEBI:156051"/>
    </reaction>
</comment>
<comment type="catalytic activity">
    <reaction evidence="1">
        <text>L-tyrosyl-[protein] + UTP = O-(5'-uridylyl)-L-tyrosyl-[protein] + diphosphate</text>
        <dbReference type="Rhea" id="RHEA:83887"/>
        <dbReference type="Rhea" id="RHEA-COMP:10136"/>
        <dbReference type="Rhea" id="RHEA-COMP:20238"/>
        <dbReference type="ChEBI" id="CHEBI:33019"/>
        <dbReference type="ChEBI" id="CHEBI:46398"/>
        <dbReference type="ChEBI" id="CHEBI:46858"/>
        <dbReference type="ChEBI" id="CHEBI:90602"/>
    </reaction>
</comment>
<comment type="cofactor">
    <cofactor evidence="1">
        <name>Mg(2+)</name>
        <dbReference type="ChEBI" id="CHEBI:18420"/>
    </cofactor>
    <cofactor evidence="1">
        <name>Mn(2+)</name>
        <dbReference type="ChEBI" id="CHEBI:29035"/>
    </cofactor>
</comment>
<comment type="similarity">
    <text evidence="1">Belongs to the SELO family.</text>
</comment>
<name>SELO_BACAH</name>
<dbReference type="EC" id="2.7.7.-" evidence="1"/>
<dbReference type="EC" id="2.7.7.108" evidence="1"/>
<dbReference type="EMBL" id="CP000485">
    <property type="protein sequence ID" value="ABK86411.1"/>
    <property type="molecule type" value="Genomic_DNA"/>
</dbReference>
<dbReference type="RefSeq" id="WP_000164935.1">
    <property type="nucleotide sequence ID" value="NC_008600.1"/>
</dbReference>
<dbReference type="SMR" id="A0RGR8"/>
<dbReference type="KEGG" id="btl:BALH_3159"/>
<dbReference type="HOGENOM" id="CLU_010245_4_1_9"/>
<dbReference type="GO" id="GO:0070733">
    <property type="term" value="F:AMPylase activity"/>
    <property type="evidence" value="ECO:0007669"/>
    <property type="project" value="TreeGrafter"/>
</dbReference>
<dbReference type="GO" id="GO:0005524">
    <property type="term" value="F:ATP binding"/>
    <property type="evidence" value="ECO:0007669"/>
    <property type="project" value="UniProtKB-UniRule"/>
</dbReference>
<dbReference type="GO" id="GO:0000287">
    <property type="term" value="F:magnesium ion binding"/>
    <property type="evidence" value="ECO:0007669"/>
    <property type="project" value="UniProtKB-UniRule"/>
</dbReference>
<dbReference type="HAMAP" id="MF_00692">
    <property type="entry name" value="YdiU_SelO"/>
    <property type="match status" value="1"/>
</dbReference>
<dbReference type="InterPro" id="IPR003846">
    <property type="entry name" value="SelO"/>
</dbReference>
<dbReference type="NCBIfam" id="NF000658">
    <property type="entry name" value="PRK00029.1"/>
    <property type="match status" value="1"/>
</dbReference>
<dbReference type="PANTHER" id="PTHR32057">
    <property type="entry name" value="PROTEIN ADENYLYLTRANSFERASE SELO, MITOCHONDRIAL"/>
    <property type="match status" value="1"/>
</dbReference>
<dbReference type="PANTHER" id="PTHR32057:SF14">
    <property type="entry name" value="PROTEIN ADENYLYLTRANSFERASE SELO, MITOCHONDRIAL"/>
    <property type="match status" value="1"/>
</dbReference>
<dbReference type="Pfam" id="PF02696">
    <property type="entry name" value="SelO"/>
    <property type="match status" value="1"/>
</dbReference>
<proteinExistence type="inferred from homology"/>
<accession>A0RGR8</accession>
<gene>
    <name evidence="1" type="primary">ydiU</name>
    <name evidence="1" type="synonym">selO</name>
    <name type="ordered locus">BALH_3159</name>
</gene>